<reference key="1">
    <citation type="journal article" date="2008" name="Chem. Biol. Interact.">
        <title>Extending the Bacillus cereus group genomics to putative food-borne pathogens of different toxicity.</title>
        <authorList>
            <person name="Lapidus A."/>
            <person name="Goltsman E."/>
            <person name="Auger S."/>
            <person name="Galleron N."/>
            <person name="Segurens B."/>
            <person name="Dossat C."/>
            <person name="Land M.L."/>
            <person name="Broussolle V."/>
            <person name="Brillard J."/>
            <person name="Guinebretiere M.-H."/>
            <person name="Sanchis V."/>
            <person name="Nguen-the C."/>
            <person name="Lereclus D."/>
            <person name="Richardson P."/>
            <person name="Wincker P."/>
            <person name="Weissenbach J."/>
            <person name="Ehrlich S.D."/>
            <person name="Sorokin A."/>
        </authorList>
    </citation>
    <scope>NUCLEOTIDE SEQUENCE [LARGE SCALE GENOMIC DNA]</scope>
    <source>
        <strain>KBAB4</strain>
    </source>
</reference>
<comment type="function">
    <text evidence="1">May catalyze the final step in cell wall teichoic acid biosynthesis, the transfer of the anionic cell wall polymers (APs) from their lipid-linked precursor to the cell wall peptidoglycan (PG).</text>
</comment>
<comment type="pathway">
    <text evidence="1">Cell wall biogenesis.</text>
</comment>
<comment type="subcellular location">
    <subcellularLocation>
        <location evidence="1">Cell membrane</location>
        <topology evidence="1">Single-pass type II membrane protein</topology>
    </subcellularLocation>
</comment>
<comment type="similarity">
    <text evidence="1">Belongs to the LytR/CpsA/Psr (LCP) family.</text>
</comment>
<gene>
    <name evidence="1" type="primary">tagU</name>
    <name type="ordered locus">BcerKBAB4_5058</name>
</gene>
<name>TAGU_BACMK</name>
<proteinExistence type="inferred from homology"/>
<evidence type="ECO:0000255" key="1">
    <source>
        <dbReference type="HAMAP-Rule" id="MF_01140"/>
    </source>
</evidence>
<organism>
    <name type="scientific">Bacillus mycoides (strain KBAB4)</name>
    <name type="common">Bacillus weihenstephanensis</name>
    <dbReference type="NCBI Taxonomy" id="315730"/>
    <lineage>
        <taxon>Bacteria</taxon>
        <taxon>Bacillati</taxon>
        <taxon>Bacillota</taxon>
        <taxon>Bacilli</taxon>
        <taxon>Bacillales</taxon>
        <taxon>Bacillaceae</taxon>
        <taxon>Bacillus</taxon>
        <taxon>Bacillus cereus group</taxon>
    </lineage>
</organism>
<accession>A9VRA8</accession>
<keyword id="KW-1003">Cell membrane</keyword>
<keyword id="KW-0961">Cell wall biogenesis/degradation</keyword>
<keyword id="KW-0472">Membrane</keyword>
<keyword id="KW-0735">Signal-anchor</keyword>
<keyword id="KW-0808">Transferase</keyword>
<keyword id="KW-0812">Transmembrane</keyword>
<keyword id="KW-1133">Transmembrane helix</keyword>
<feature type="chain" id="PRO_1000137342" description="Polyisoprenyl-teichoic acid--peptidoglycan teichoic acid transferase TagU">
    <location>
        <begin position="1"/>
        <end position="304"/>
    </location>
</feature>
<feature type="topological domain" description="Cytoplasmic" evidence="1">
    <location>
        <begin position="1"/>
        <end position="4"/>
    </location>
</feature>
<feature type="transmembrane region" description="Helical; Signal-anchor for type II membrane protein" evidence="1">
    <location>
        <begin position="5"/>
        <end position="25"/>
    </location>
</feature>
<feature type="topological domain" description="Extracellular" evidence="1">
    <location>
        <begin position="26"/>
        <end position="304"/>
    </location>
</feature>
<sequence>MKKKILFWILGIIGIMIIGGGVYAYNVYSSVSKTLDEVHKPLKRDKDSNGVETAKISKSEPVSILLLGADERGEDKGRSDSLMVITLNPKNNSMKTVSIPRDTYTEIVGKGKSDKINHAYAFGGVDMSVATVEKFLSVPINYYIEVNMEGFKDIVDAVGGVDVNNDLEFTANGHHFAKGNVHLTGDQALAFTRMRKEDPRGDFGRQMRQRQVMQAVIKKGASFSSLSSYGDVLTAIQKNVKTNLTQDQMFDMQKNYKNCLQNSEEIQIPGDGHKAADGIWYYYVPDAAKQDITNKLRAHLELTK</sequence>
<dbReference type="EC" id="2.7.8.-" evidence="1"/>
<dbReference type="EMBL" id="CP000903">
    <property type="protein sequence ID" value="ABY46204.1"/>
    <property type="molecule type" value="Genomic_DNA"/>
</dbReference>
<dbReference type="RefSeq" id="WP_012262019.1">
    <property type="nucleotide sequence ID" value="NC_010184.1"/>
</dbReference>
<dbReference type="SMR" id="A9VRA8"/>
<dbReference type="KEGG" id="bwe:BcerKBAB4_5058"/>
<dbReference type="eggNOG" id="COG1316">
    <property type="taxonomic scope" value="Bacteria"/>
</dbReference>
<dbReference type="HOGENOM" id="CLU_016455_2_2_9"/>
<dbReference type="Proteomes" id="UP000002154">
    <property type="component" value="Chromosome"/>
</dbReference>
<dbReference type="GO" id="GO:0005886">
    <property type="term" value="C:plasma membrane"/>
    <property type="evidence" value="ECO:0007669"/>
    <property type="project" value="UniProtKB-SubCell"/>
</dbReference>
<dbReference type="GO" id="GO:0016780">
    <property type="term" value="F:phosphotransferase activity, for other substituted phosphate groups"/>
    <property type="evidence" value="ECO:0007669"/>
    <property type="project" value="UniProtKB-UniRule"/>
</dbReference>
<dbReference type="GO" id="GO:0070726">
    <property type="term" value="P:cell wall assembly"/>
    <property type="evidence" value="ECO:0007669"/>
    <property type="project" value="UniProtKB-UniRule"/>
</dbReference>
<dbReference type="Gene3D" id="3.40.630.190">
    <property type="entry name" value="LCP protein"/>
    <property type="match status" value="1"/>
</dbReference>
<dbReference type="HAMAP" id="MF_01140">
    <property type="entry name" value="TagU_transferase"/>
    <property type="match status" value="1"/>
</dbReference>
<dbReference type="InterPro" id="IPR050922">
    <property type="entry name" value="LytR/CpsA/Psr_CW_biosynth"/>
</dbReference>
<dbReference type="InterPro" id="IPR004474">
    <property type="entry name" value="LytR_CpsA_psr"/>
</dbReference>
<dbReference type="InterPro" id="IPR023734">
    <property type="entry name" value="TagU"/>
</dbReference>
<dbReference type="NCBIfam" id="TIGR00350">
    <property type="entry name" value="lytR_cpsA_psr"/>
    <property type="match status" value="1"/>
</dbReference>
<dbReference type="NCBIfam" id="NF006897">
    <property type="entry name" value="PRK09379.1"/>
    <property type="match status" value="1"/>
</dbReference>
<dbReference type="PANTHER" id="PTHR33392">
    <property type="entry name" value="POLYISOPRENYL-TEICHOIC ACID--PEPTIDOGLYCAN TEICHOIC ACID TRANSFERASE TAGU"/>
    <property type="match status" value="1"/>
</dbReference>
<dbReference type="PANTHER" id="PTHR33392:SF6">
    <property type="entry name" value="POLYISOPRENYL-TEICHOIC ACID--PEPTIDOGLYCAN TEICHOIC ACID TRANSFERASE TAGU"/>
    <property type="match status" value="1"/>
</dbReference>
<dbReference type="Pfam" id="PF03816">
    <property type="entry name" value="LytR_cpsA_psr"/>
    <property type="match status" value="1"/>
</dbReference>
<protein>
    <recommendedName>
        <fullName evidence="1">Polyisoprenyl-teichoic acid--peptidoglycan teichoic acid transferase TagU</fullName>
        <ecNumber evidence="1">2.7.8.-</ecNumber>
    </recommendedName>
</protein>